<comment type="function">
    <text evidence="1">Binds the 23S rRNA.</text>
</comment>
<comment type="cofactor">
    <cofactor evidence="1">
        <name>Zn(2+)</name>
        <dbReference type="ChEBI" id="CHEBI:29105"/>
    </cofactor>
    <text evidence="1">Binds 1 zinc ion per subunit.</text>
</comment>
<comment type="subunit">
    <text evidence="1">Part of the 50S ribosomal subunit.</text>
</comment>
<comment type="similarity">
    <text evidence="1">Belongs to the bacterial ribosomal protein bL31 family. Type A subfamily.</text>
</comment>
<protein>
    <recommendedName>
        <fullName evidence="1">Large ribosomal subunit protein bL31</fullName>
    </recommendedName>
    <alternativeName>
        <fullName evidence="2">50S ribosomal protein L31</fullName>
    </alternativeName>
</protein>
<organism>
    <name type="scientific">Acinetobacter baumannii (strain ATCC 17978 / DSM 105126 / CIP 53.77 / LMG 1025 / NCDC KC755 / 5377)</name>
    <dbReference type="NCBI Taxonomy" id="400667"/>
    <lineage>
        <taxon>Bacteria</taxon>
        <taxon>Pseudomonadati</taxon>
        <taxon>Pseudomonadota</taxon>
        <taxon>Gammaproteobacteria</taxon>
        <taxon>Moraxellales</taxon>
        <taxon>Moraxellaceae</taxon>
        <taxon>Acinetobacter</taxon>
        <taxon>Acinetobacter calcoaceticus/baumannii complex</taxon>
    </lineage>
</organism>
<dbReference type="EMBL" id="CP000521">
    <property type="protein sequence ID" value="ABO12841.1"/>
    <property type="molecule type" value="Genomic_DNA"/>
</dbReference>
<dbReference type="RefSeq" id="WP_001200845.1">
    <property type="nucleotide sequence ID" value="NZ_CP053098.1"/>
</dbReference>
<dbReference type="SMR" id="A3M7E7"/>
<dbReference type="GeneID" id="92894731"/>
<dbReference type="KEGG" id="acb:A1S_2423"/>
<dbReference type="HOGENOM" id="CLU_114306_4_3_6"/>
<dbReference type="GO" id="GO:1990904">
    <property type="term" value="C:ribonucleoprotein complex"/>
    <property type="evidence" value="ECO:0007669"/>
    <property type="project" value="UniProtKB-KW"/>
</dbReference>
<dbReference type="GO" id="GO:0005840">
    <property type="term" value="C:ribosome"/>
    <property type="evidence" value="ECO:0007669"/>
    <property type="project" value="UniProtKB-KW"/>
</dbReference>
<dbReference type="GO" id="GO:0046872">
    <property type="term" value="F:metal ion binding"/>
    <property type="evidence" value="ECO:0007669"/>
    <property type="project" value="UniProtKB-KW"/>
</dbReference>
<dbReference type="GO" id="GO:0019843">
    <property type="term" value="F:rRNA binding"/>
    <property type="evidence" value="ECO:0007669"/>
    <property type="project" value="UniProtKB-KW"/>
</dbReference>
<dbReference type="GO" id="GO:0003735">
    <property type="term" value="F:structural constituent of ribosome"/>
    <property type="evidence" value="ECO:0007669"/>
    <property type="project" value="InterPro"/>
</dbReference>
<dbReference type="GO" id="GO:0006412">
    <property type="term" value="P:translation"/>
    <property type="evidence" value="ECO:0007669"/>
    <property type="project" value="UniProtKB-UniRule"/>
</dbReference>
<dbReference type="Gene3D" id="4.10.830.30">
    <property type="entry name" value="Ribosomal protein L31"/>
    <property type="match status" value="1"/>
</dbReference>
<dbReference type="HAMAP" id="MF_00501">
    <property type="entry name" value="Ribosomal_bL31_1"/>
    <property type="match status" value="1"/>
</dbReference>
<dbReference type="InterPro" id="IPR034704">
    <property type="entry name" value="Ribosomal_bL28/bL31-like_sf"/>
</dbReference>
<dbReference type="InterPro" id="IPR002150">
    <property type="entry name" value="Ribosomal_bL31"/>
</dbReference>
<dbReference type="InterPro" id="IPR027491">
    <property type="entry name" value="Ribosomal_bL31_A"/>
</dbReference>
<dbReference type="InterPro" id="IPR042105">
    <property type="entry name" value="Ribosomal_bL31_sf"/>
</dbReference>
<dbReference type="NCBIfam" id="TIGR00105">
    <property type="entry name" value="L31"/>
    <property type="match status" value="1"/>
</dbReference>
<dbReference type="NCBIfam" id="NF000612">
    <property type="entry name" value="PRK00019.1"/>
    <property type="match status" value="1"/>
</dbReference>
<dbReference type="NCBIfam" id="NF001809">
    <property type="entry name" value="PRK00528.1"/>
    <property type="match status" value="1"/>
</dbReference>
<dbReference type="PANTHER" id="PTHR33280">
    <property type="entry name" value="50S RIBOSOMAL PROTEIN L31, CHLOROPLASTIC"/>
    <property type="match status" value="1"/>
</dbReference>
<dbReference type="PANTHER" id="PTHR33280:SF6">
    <property type="entry name" value="LARGE RIBOSOMAL SUBUNIT PROTEIN BL31A"/>
    <property type="match status" value="1"/>
</dbReference>
<dbReference type="Pfam" id="PF01197">
    <property type="entry name" value="Ribosomal_L31"/>
    <property type="match status" value="1"/>
</dbReference>
<dbReference type="PRINTS" id="PR01249">
    <property type="entry name" value="RIBOSOMALL31"/>
</dbReference>
<dbReference type="SUPFAM" id="SSF143800">
    <property type="entry name" value="L28p-like"/>
    <property type="match status" value="1"/>
</dbReference>
<dbReference type="PROSITE" id="PS01143">
    <property type="entry name" value="RIBOSOMAL_L31"/>
    <property type="match status" value="1"/>
</dbReference>
<accession>A3M7E7</accession>
<reference key="1">
    <citation type="journal article" date="2007" name="Genes Dev.">
        <title>New insights into Acinetobacter baumannii pathogenesis revealed by high-density pyrosequencing and transposon mutagenesis.</title>
        <authorList>
            <person name="Smith M.G."/>
            <person name="Gianoulis T.A."/>
            <person name="Pukatzki S."/>
            <person name="Mekalanos J.J."/>
            <person name="Ornston L.N."/>
            <person name="Gerstein M."/>
            <person name="Snyder M."/>
        </authorList>
    </citation>
    <scope>NUCLEOTIDE SEQUENCE [LARGE SCALE GENOMIC DNA]</scope>
    <source>
        <strain>ATCC 17978 / DSM 105126 / CIP 53.77 / LMG 1025 / NCDC KC755 / 5377</strain>
    </source>
</reference>
<feature type="chain" id="PRO_1000126545" description="Large ribosomal subunit protein bL31">
    <location>
        <begin position="1"/>
        <end position="74"/>
    </location>
</feature>
<feature type="binding site" evidence="1">
    <location>
        <position position="16"/>
    </location>
    <ligand>
        <name>Zn(2+)</name>
        <dbReference type="ChEBI" id="CHEBI:29105"/>
    </ligand>
</feature>
<feature type="binding site" evidence="1">
    <location>
        <position position="18"/>
    </location>
    <ligand>
        <name>Zn(2+)</name>
        <dbReference type="ChEBI" id="CHEBI:29105"/>
    </ligand>
</feature>
<feature type="binding site" evidence="1">
    <location>
        <position position="38"/>
    </location>
    <ligand>
        <name>Zn(2+)</name>
        <dbReference type="ChEBI" id="CHEBI:29105"/>
    </ligand>
</feature>
<feature type="binding site" evidence="1">
    <location>
        <position position="41"/>
    </location>
    <ligand>
        <name>Zn(2+)</name>
        <dbReference type="ChEBI" id="CHEBI:29105"/>
    </ligand>
</feature>
<proteinExistence type="inferred from homology"/>
<evidence type="ECO:0000255" key="1">
    <source>
        <dbReference type="HAMAP-Rule" id="MF_00501"/>
    </source>
</evidence>
<evidence type="ECO:0000305" key="2"/>
<keyword id="KW-0479">Metal-binding</keyword>
<keyword id="KW-0687">Ribonucleoprotein</keyword>
<keyword id="KW-0689">Ribosomal protein</keyword>
<keyword id="KW-0694">RNA-binding</keyword>
<keyword id="KW-0699">rRNA-binding</keyword>
<keyword id="KW-0862">Zinc</keyword>
<gene>
    <name evidence="1" type="primary">rpmE</name>
    <name type="ordered locus">A1S_2423</name>
</gene>
<sequence>MRADIHPKYEKLVATCSCGNVIETRSALGKETIYLDVCSACHPFYTGKQKNVDTGGRIDKFKQRFAGMSRSIKR</sequence>
<name>RL31_ACIBT</name>